<protein>
    <recommendedName>
        <fullName>T-complex protein 1 subunit eta</fullName>
        <shortName>TCP-1-eta</shortName>
        <ecNumber evidence="2">3.6.1.-</ecNumber>
    </recommendedName>
    <alternativeName>
        <fullName>CCT-eta</fullName>
    </alternativeName>
</protein>
<reference evidence="6 7" key="1">
    <citation type="journal article" date="2005" name="Genome Biol.">
        <title>Full-length cDNAs from chicken bursal lymphocytes to facilitate gene function analysis.</title>
        <authorList>
            <person name="Caldwell R.B."/>
            <person name="Kierzek A.M."/>
            <person name="Arakawa H."/>
            <person name="Bezzubov Y."/>
            <person name="Zaim J."/>
            <person name="Fiedler P."/>
            <person name="Kutter S."/>
            <person name="Blagodatski A."/>
            <person name="Kostovska D."/>
            <person name="Koter M."/>
            <person name="Plachy J."/>
            <person name="Carninci P."/>
            <person name="Hayashizaki Y."/>
            <person name="Buerstedde J.-M."/>
        </authorList>
    </citation>
    <scope>NUCLEOTIDE SEQUENCE [LARGE SCALE MRNA]</scope>
    <source>
        <strain evidence="7">CB</strain>
        <tissue evidence="7">Bursa of Fabricius</tissue>
    </source>
</reference>
<reference evidence="6" key="2">
    <citation type="journal article" date="2005" name="Proteomics">
        <title>Proteomic analysis of the Gallus gallus embryo at stage-29 of development.</title>
        <authorList>
            <person name="Agudo D."/>
            <person name="Gomez-Esquer F."/>
            <person name="Diaz-Gil G."/>
            <person name="Martinez-Arribas F."/>
            <person name="Delcan J."/>
            <person name="Schneider J."/>
            <person name="Palomar M.A."/>
            <person name="Linares R."/>
        </authorList>
    </citation>
    <scope>IDENTIFICATION</scope>
    <scope>MASS SPECTROMETRY</scope>
    <source>
        <tissue evidence="5">Embryo</tissue>
    </source>
</reference>
<dbReference type="EC" id="3.6.1.-" evidence="2"/>
<dbReference type="EMBL" id="AJ720426">
    <property type="protein sequence ID" value="CAG32085.1"/>
    <property type="molecule type" value="mRNA"/>
</dbReference>
<dbReference type="SMR" id="Q5ZJK8"/>
<dbReference type="BioGRID" id="687761">
    <property type="interactions" value="1"/>
</dbReference>
<dbReference type="FunCoup" id="Q5ZJK8">
    <property type="interactions" value="3575"/>
</dbReference>
<dbReference type="STRING" id="9031.ENSGALP00000036304"/>
<dbReference type="PaxDb" id="9031-ENSGALP00000036304"/>
<dbReference type="VEuPathDB" id="HostDB:geneid_428806"/>
<dbReference type="eggNOG" id="KOG0361">
    <property type="taxonomic scope" value="Eukaryota"/>
</dbReference>
<dbReference type="HOGENOM" id="CLU_008891_7_1_1"/>
<dbReference type="InParanoid" id="Q5ZJK8"/>
<dbReference type="OrthoDB" id="1935484at2759"/>
<dbReference type="PhylomeDB" id="Q5ZJK8"/>
<dbReference type="Proteomes" id="UP000000539">
    <property type="component" value="Unassembled WGS sequence"/>
</dbReference>
<dbReference type="GO" id="GO:0005832">
    <property type="term" value="C:chaperonin-containing T-complex"/>
    <property type="evidence" value="ECO:0000318"/>
    <property type="project" value="GO_Central"/>
</dbReference>
<dbReference type="GO" id="GO:0005524">
    <property type="term" value="F:ATP binding"/>
    <property type="evidence" value="ECO:0007669"/>
    <property type="project" value="UniProtKB-KW"/>
</dbReference>
<dbReference type="GO" id="GO:0016887">
    <property type="term" value="F:ATP hydrolysis activity"/>
    <property type="evidence" value="ECO:0007669"/>
    <property type="project" value="InterPro"/>
</dbReference>
<dbReference type="GO" id="GO:0140662">
    <property type="term" value="F:ATP-dependent protein folding chaperone"/>
    <property type="evidence" value="ECO:0007669"/>
    <property type="project" value="InterPro"/>
</dbReference>
<dbReference type="GO" id="GO:0051082">
    <property type="term" value="F:unfolded protein binding"/>
    <property type="evidence" value="ECO:0000318"/>
    <property type="project" value="GO_Central"/>
</dbReference>
<dbReference type="GO" id="GO:0006457">
    <property type="term" value="P:protein folding"/>
    <property type="evidence" value="ECO:0000318"/>
    <property type="project" value="GO_Central"/>
</dbReference>
<dbReference type="CDD" id="cd03340">
    <property type="entry name" value="TCP1_eta"/>
    <property type="match status" value="1"/>
</dbReference>
<dbReference type="FunFam" id="1.10.560.10:FF:000017">
    <property type="entry name" value="T-complex protein 1 subunit eta"/>
    <property type="match status" value="1"/>
</dbReference>
<dbReference type="FunFam" id="1.10.560.10:FF:000045">
    <property type="entry name" value="T-complex protein 1 subunit eta"/>
    <property type="match status" value="1"/>
</dbReference>
<dbReference type="FunFam" id="3.30.260.10:FF:000022">
    <property type="entry name" value="T-complex protein 1 subunit eta"/>
    <property type="match status" value="1"/>
</dbReference>
<dbReference type="FunFam" id="3.30.260.10:FF:000049">
    <property type="entry name" value="T-complex protein 1 subunit eta"/>
    <property type="match status" value="1"/>
</dbReference>
<dbReference type="FunFam" id="3.50.7.10:FF:000006">
    <property type="entry name" value="T-complex protein 1 subunit eta"/>
    <property type="match status" value="1"/>
</dbReference>
<dbReference type="Gene3D" id="3.50.7.10">
    <property type="entry name" value="GroEL"/>
    <property type="match status" value="1"/>
</dbReference>
<dbReference type="Gene3D" id="1.10.560.10">
    <property type="entry name" value="GroEL-like equatorial domain"/>
    <property type="match status" value="1"/>
</dbReference>
<dbReference type="Gene3D" id="3.30.260.10">
    <property type="entry name" value="TCP-1-like chaperonin intermediate domain"/>
    <property type="match status" value="1"/>
</dbReference>
<dbReference type="InterPro" id="IPR012720">
    <property type="entry name" value="Chap_CCT_eta"/>
</dbReference>
<dbReference type="InterPro" id="IPR017998">
    <property type="entry name" value="Chaperone_TCP-1"/>
</dbReference>
<dbReference type="InterPro" id="IPR002194">
    <property type="entry name" value="Chaperonin_TCP-1_CS"/>
</dbReference>
<dbReference type="InterPro" id="IPR002423">
    <property type="entry name" value="Cpn60/GroEL/TCP-1"/>
</dbReference>
<dbReference type="InterPro" id="IPR027409">
    <property type="entry name" value="GroEL-like_apical_dom_sf"/>
</dbReference>
<dbReference type="InterPro" id="IPR027413">
    <property type="entry name" value="GROEL-like_equatorial_sf"/>
</dbReference>
<dbReference type="InterPro" id="IPR027410">
    <property type="entry name" value="TCP-1-like_intermed_sf"/>
</dbReference>
<dbReference type="InterPro" id="IPR053374">
    <property type="entry name" value="TCP-1_chaperonin"/>
</dbReference>
<dbReference type="InterPro" id="IPR054827">
    <property type="entry name" value="thermosome_alpha"/>
</dbReference>
<dbReference type="NCBIfam" id="TIGR02345">
    <property type="entry name" value="chap_CCT_eta"/>
    <property type="match status" value="1"/>
</dbReference>
<dbReference type="NCBIfam" id="NF041082">
    <property type="entry name" value="thermosome_alpha"/>
    <property type="match status" value="1"/>
</dbReference>
<dbReference type="NCBIfam" id="NF041083">
    <property type="entry name" value="thermosome_beta"/>
    <property type="match status" value="1"/>
</dbReference>
<dbReference type="PANTHER" id="PTHR11353">
    <property type="entry name" value="CHAPERONIN"/>
    <property type="match status" value="1"/>
</dbReference>
<dbReference type="Pfam" id="PF00118">
    <property type="entry name" value="Cpn60_TCP1"/>
    <property type="match status" value="1"/>
</dbReference>
<dbReference type="PRINTS" id="PR00304">
    <property type="entry name" value="TCOMPLEXTCP1"/>
</dbReference>
<dbReference type="SUPFAM" id="SSF52029">
    <property type="entry name" value="GroEL apical domain-like"/>
    <property type="match status" value="1"/>
</dbReference>
<dbReference type="SUPFAM" id="SSF48592">
    <property type="entry name" value="GroEL equatorial domain-like"/>
    <property type="match status" value="1"/>
</dbReference>
<dbReference type="SUPFAM" id="SSF54849">
    <property type="entry name" value="GroEL-intermediate domain like"/>
    <property type="match status" value="1"/>
</dbReference>
<dbReference type="PROSITE" id="PS00750">
    <property type="entry name" value="TCP1_1"/>
    <property type="match status" value="1"/>
</dbReference>
<dbReference type="PROSITE" id="PS00751">
    <property type="entry name" value="TCP1_2"/>
    <property type="match status" value="1"/>
</dbReference>
<dbReference type="PROSITE" id="PS00995">
    <property type="entry name" value="TCP1_3"/>
    <property type="match status" value="1"/>
</dbReference>
<accession>Q5ZJK8</accession>
<accession>P84166</accession>
<name>TCPH_CHICK</name>
<feature type="chain" id="PRO_0000223484" description="T-complex protein 1 subunit eta">
    <location>
        <begin position="1"/>
        <end position="553"/>
    </location>
</feature>
<feature type="region of interest" description="Disordered" evidence="4">
    <location>
        <begin position="523"/>
        <end position="553"/>
    </location>
</feature>
<feature type="compositionally biased region" description="Low complexity" evidence="4">
    <location>
        <begin position="539"/>
        <end position="553"/>
    </location>
</feature>
<feature type="binding site" evidence="2">
    <location>
        <position position="41"/>
    </location>
    <ligand>
        <name>ADP</name>
        <dbReference type="ChEBI" id="CHEBI:456216"/>
    </ligand>
</feature>
<feature type="binding site" evidence="2">
    <location>
        <position position="41"/>
    </location>
    <ligand>
        <name>ATP</name>
        <dbReference type="ChEBI" id="CHEBI:30616"/>
    </ligand>
</feature>
<feature type="binding site" evidence="2">
    <location>
        <position position="92"/>
    </location>
    <ligand>
        <name>Mg(2+)</name>
        <dbReference type="ChEBI" id="CHEBI:18420"/>
    </ligand>
</feature>
<feature type="binding site" evidence="2">
    <location>
        <position position="93"/>
    </location>
    <ligand>
        <name>ADP</name>
        <dbReference type="ChEBI" id="CHEBI:456216"/>
    </ligand>
</feature>
<feature type="binding site" evidence="2">
    <location>
        <position position="93"/>
    </location>
    <ligand>
        <name>ATP</name>
        <dbReference type="ChEBI" id="CHEBI:30616"/>
    </ligand>
</feature>
<feature type="binding site" evidence="2">
    <location>
        <position position="94"/>
    </location>
    <ligand>
        <name>ADP</name>
        <dbReference type="ChEBI" id="CHEBI:456216"/>
    </ligand>
</feature>
<feature type="binding site" evidence="2">
    <location>
        <position position="95"/>
    </location>
    <ligand>
        <name>ADP</name>
        <dbReference type="ChEBI" id="CHEBI:456216"/>
    </ligand>
</feature>
<feature type="binding site" evidence="2">
    <location>
        <position position="96"/>
    </location>
    <ligand>
        <name>ADP</name>
        <dbReference type="ChEBI" id="CHEBI:456216"/>
    </ligand>
</feature>
<feature type="binding site" evidence="2">
    <location>
        <position position="96"/>
    </location>
    <ligand>
        <name>ATP</name>
        <dbReference type="ChEBI" id="CHEBI:30616"/>
    </ligand>
</feature>
<feature type="binding site" evidence="2">
    <location>
        <position position="164"/>
    </location>
    <ligand>
        <name>ADP</name>
        <dbReference type="ChEBI" id="CHEBI:456216"/>
    </ligand>
</feature>
<feature type="binding site" evidence="2">
    <location>
        <position position="165"/>
    </location>
    <ligand>
        <name>ADP</name>
        <dbReference type="ChEBI" id="CHEBI:456216"/>
    </ligand>
</feature>
<feature type="binding site" evidence="2">
    <location>
        <position position="398"/>
    </location>
    <ligand>
        <name>ATP</name>
        <dbReference type="ChEBI" id="CHEBI:30616"/>
    </ligand>
</feature>
<feature type="binding site" evidence="2">
    <location>
        <position position="409"/>
    </location>
    <ligand>
        <name>ADP</name>
        <dbReference type="ChEBI" id="CHEBI:456216"/>
    </ligand>
</feature>
<feature type="binding site" evidence="2">
    <location>
        <position position="409"/>
    </location>
    <ligand>
        <name>ATP</name>
        <dbReference type="ChEBI" id="CHEBI:30616"/>
    </ligand>
</feature>
<feature type="binding site" evidence="2">
    <location>
        <position position="494"/>
    </location>
    <ligand>
        <name>ADP</name>
        <dbReference type="ChEBI" id="CHEBI:456216"/>
    </ligand>
</feature>
<feature type="binding site" evidence="2">
    <location>
        <position position="499"/>
    </location>
    <ligand>
        <name>ADP</name>
        <dbReference type="ChEBI" id="CHEBI:456216"/>
    </ligand>
</feature>
<feature type="binding site" evidence="2">
    <location>
        <position position="499"/>
    </location>
    <ligand>
        <name>ATP</name>
        <dbReference type="ChEBI" id="CHEBI:30616"/>
    </ligand>
</feature>
<gene>
    <name evidence="2" type="primary">CCT7</name>
    <name type="ORF">RCJMB04_17g3</name>
</gene>
<comment type="function">
    <text evidence="2">Component of the chaperonin-containing T-complex (TRiC), a molecular chaperone complex that assists the folding of actin, tubulin and other proteins upon ATP hydrolysis.</text>
</comment>
<comment type="catalytic activity">
    <reaction evidence="2">
        <text>ATP + H2O = ADP + phosphate + H(+)</text>
        <dbReference type="Rhea" id="RHEA:13065"/>
        <dbReference type="ChEBI" id="CHEBI:15377"/>
        <dbReference type="ChEBI" id="CHEBI:15378"/>
        <dbReference type="ChEBI" id="CHEBI:30616"/>
        <dbReference type="ChEBI" id="CHEBI:43474"/>
        <dbReference type="ChEBI" id="CHEBI:456216"/>
    </reaction>
</comment>
<comment type="subunit">
    <text evidence="2">Component of the chaperonin-containing T-complex (TRiC), a hexadecamer composed of two identical back-to-back stacked rings enclosing a protein folding chamber. Each ring is made up of eight different subunits: TCP1/CCT1, CCT2, CCT3, CCT4, CCT5, CCT6A/CCT6, CCT7, CCT8.</text>
</comment>
<comment type="subcellular location">
    <subcellularLocation>
        <location evidence="1">Cytoplasm</location>
    </subcellularLocation>
</comment>
<comment type="mass spectrometry"/>
<comment type="similarity">
    <text evidence="3">Belongs to the TCP-1 chaperonin family.</text>
</comment>
<organism>
    <name type="scientific">Gallus gallus</name>
    <name type="common">Chicken</name>
    <dbReference type="NCBI Taxonomy" id="9031"/>
    <lineage>
        <taxon>Eukaryota</taxon>
        <taxon>Metazoa</taxon>
        <taxon>Chordata</taxon>
        <taxon>Craniata</taxon>
        <taxon>Vertebrata</taxon>
        <taxon>Euteleostomi</taxon>
        <taxon>Archelosauria</taxon>
        <taxon>Archosauria</taxon>
        <taxon>Dinosauria</taxon>
        <taxon>Saurischia</taxon>
        <taxon>Theropoda</taxon>
        <taxon>Coelurosauria</taxon>
        <taxon>Aves</taxon>
        <taxon>Neognathae</taxon>
        <taxon>Galloanserae</taxon>
        <taxon>Galliformes</taxon>
        <taxon>Phasianidae</taxon>
        <taxon>Phasianinae</taxon>
        <taxon>Gallus</taxon>
    </lineage>
</organism>
<proteinExistence type="evidence at protein level"/>
<sequence>MMPTPVILLKEGTDTSQGIPQLVSNINACQVIAEAVRTTLGPRGMDKLIVDDRGKATISNDGATILKLLDVVHPAAKTLVDIAKSQDAEVGDGTTSVTLLAAEFLKQVKPYVEEGLHPQIIIRAFRTATQLAVNKIKDIAVSVKKEDKDEQRSLLEKCAATALSSKLISQSKEFFSKMVVDAVMMLDDLLQLKMIGIKKVQGGALEDSQLVAGVAFKKTFSYAGFEMQPKKYQSPKIALLNVELELKAEKDNAEVRVNTVEDYQAIVDAEWNILYDKLDKIHKSGAKVVLSKLPIGDVATQYFADRDMFCAGRVPEEDLKRTMMACGGSIQTSVNALSDDVLGRCELFEEIQIGGDRYNFFTGCPKAKTCTIILRGGAEQFMEETERSLHDAIMIVRRAIKNDSVVAGGGAIEMELSKYLRDYSRTIPGKQQLLIGAYAKALEIIPRQLCDNAGFDATNILNKLRAKHAQGGMWYGVDVNNEDIADNFEACVWEPAIVRINALTAASEAACLIVSVDETIKNPRSTVDAPPGGRGRGRGQTPQPLRPRSVALS</sequence>
<keyword id="KW-0067">ATP-binding</keyword>
<keyword id="KW-0143">Chaperone</keyword>
<keyword id="KW-0963">Cytoplasm</keyword>
<keyword id="KW-0378">Hydrolase</keyword>
<keyword id="KW-0460">Magnesium</keyword>
<keyword id="KW-0479">Metal-binding</keyword>
<keyword id="KW-0547">Nucleotide-binding</keyword>
<keyword id="KW-1185">Reference proteome</keyword>
<evidence type="ECO:0000250" key="1">
    <source>
        <dbReference type="UniProtKB" id="P80313"/>
    </source>
</evidence>
<evidence type="ECO:0000250" key="2">
    <source>
        <dbReference type="UniProtKB" id="Q99832"/>
    </source>
</evidence>
<evidence type="ECO:0000255" key="3"/>
<evidence type="ECO:0000256" key="4">
    <source>
        <dbReference type="SAM" id="MobiDB-lite"/>
    </source>
</evidence>
<evidence type="ECO:0000269" key="5">
    <source>
    </source>
</evidence>
<evidence type="ECO:0000305" key="6"/>
<evidence type="ECO:0000312" key="7">
    <source>
        <dbReference type="EMBL" id="CAG32085.1"/>
    </source>
</evidence>